<gene>
    <name evidence="1" type="primary">deoB</name>
    <name type="ordered locus">TM_0167</name>
</gene>
<comment type="function">
    <text evidence="1">Isomerase that catalyzes the conversion of deoxy-ribose 1-phosphate (dRib-1-P) and ribose 1-phosphate (Rib-1-P) to deoxy-ribose 5-phosphate (dRib-5-P) and ribose 5-phosphate (Rib-5-P), respectively.</text>
</comment>
<comment type="catalytic activity">
    <reaction evidence="1">
        <text>2-deoxy-alpha-D-ribose 1-phosphate = 2-deoxy-D-ribose 5-phosphate</text>
        <dbReference type="Rhea" id="RHEA:27658"/>
        <dbReference type="ChEBI" id="CHEBI:57259"/>
        <dbReference type="ChEBI" id="CHEBI:62877"/>
        <dbReference type="EC" id="5.4.2.7"/>
    </reaction>
</comment>
<comment type="catalytic activity">
    <reaction evidence="1">
        <text>alpha-D-ribose 1-phosphate = D-ribose 5-phosphate</text>
        <dbReference type="Rhea" id="RHEA:18793"/>
        <dbReference type="ChEBI" id="CHEBI:57720"/>
        <dbReference type="ChEBI" id="CHEBI:78346"/>
        <dbReference type="EC" id="5.4.2.7"/>
    </reaction>
</comment>
<comment type="cofactor">
    <cofactor evidence="1">
        <name>Mn(2+)</name>
        <dbReference type="ChEBI" id="CHEBI:29035"/>
    </cofactor>
    <text evidence="1">Binds 2 manganese ions.</text>
</comment>
<comment type="pathway">
    <text evidence="1">Carbohydrate degradation; 2-deoxy-D-ribose 1-phosphate degradation; D-glyceraldehyde 3-phosphate and acetaldehyde from 2-deoxy-alpha-D-ribose 1-phosphate: step 1/2.</text>
</comment>
<comment type="subcellular location">
    <subcellularLocation>
        <location evidence="1">Cytoplasm</location>
    </subcellularLocation>
</comment>
<comment type="similarity">
    <text evidence="1">Belongs to the phosphopentomutase family.</text>
</comment>
<dbReference type="EC" id="5.4.2.7" evidence="1"/>
<dbReference type="EMBL" id="AE000512">
    <property type="protein sequence ID" value="AAD35260.1"/>
    <property type="molecule type" value="Genomic_DNA"/>
</dbReference>
<dbReference type="PIR" id="E72411">
    <property type="entry name" value="E72411"/>
</dbReference>
<dbReference type="RefSeq" id="NP_227982.1">
    <property type="nucleotide sequence ID" value="NC_000853.1"/>
</dbReference>
<dbReference type="RefSeq" id="WP_004082794.1">
    <property type="nucleotide sequence ID" value="NZ_CP011107.1"/>
</dbReference>
<dbReference type="SMR" id="Q9WY14"/>
<dbReference type="FunCoup" id="Q9WY14">
    <property type="interactions" value="50"/>
</dbReference>
<dbReference type="STRING" id="243274.TM_0167"/>
<dbReference type="PaxDb" id="243274-THEMA_03965"/>
<dbReference type="DNASU" id="897006"/>
<dbReference type="EnsemblBacteria" id="AAD35260">
    <property type="protein sequence ID" value="AAD35260"/>
    <property type="gene ID" value="TM_0167"/>
</dbReference>
<dbReference type="KEGG" id="tma:TM0167"/>
<dbReference type="KEGG" id="tmi:THEMA_03965"/>
<dbReference type="KEGG" id="tmm:Tmari_0165"/>
<dbReference type="KEGG" id="tmw:THMA_0163"/>
<dbReference type="eggNOG" id="COG1015">
    <property type="taxonomic scope" value="Bacteria"/>
</dbReference>
<dbReference type="InParanoid" id="Q9WY14"/>
<dbReference type="OrthoDB" id="9769930at2"/>
<dbReference type="BRENDA" id="5.4.2.7">
    <property type="organism ID" value="6331"/>
</dbReference>
<dbReference type="UniPathway" id="UPA00002">
    <property type="reaction ID" value="UER00467"/>
</dbReference>
<dbReference type="Proteomes" id="UP000008183">
    <property type="component" value="Chromosome"/>
</dbReference>
<dbReference type="GO" id="GO:0005829">
    <property type="term" value="C:cytosol"/>
    <property type="evidence" value="ECO:0000318"/>
    <property type="project" value="GO_Central"/>
</dbReference>
<dbReference type="GO" id="GO:0000287">
    <property type="term" value="F:magnesium ion binding"/>
    <property type="evidence" value="ECO:0007669"/>
    <property type="project" value="InterPro"/>
</dbReference>
<dbReference type="GO" id="GO:0030145">
    <property type="term" value="F:manganese ion binding"/>
    <property type="evidence" value="ECO:0007669"/>
    <property type="project" value="UniProtKB-UniRule"/>
</dbReference>
<dbReference type="GO" id="GO:0008973">
    <property type="term" value="F:phosphopentomutase activity"/>
    <property type="evidence" value="ECO:0000318"/>
    <property type="project" value="GO_Central"/>
</dbReference>
<dbReference type="GO" id="GO:0006018">
    <property type="term" value="P:2-deoxyribose 1-phosphate catabolic process"/>
    <property type="evidence" value="ECO:0007669"/>
    <property type="project" value="UniProtKB-UniRule"/>
</dbReference>
<dbReference type="GO" id="GO:0006015">
    <property type="term" value="P:5-phosphoribose 1-diphosphate biosynthetic process"/>
    <property type="evidence" value="ECO:0007669"/>
    <property type="project" value="UniProtKB-UniPathway"/>
</dbReference>
<dbReference type="GO" id="GO:0043094">
    <property type="term" value="P:metabolic compound salvage"/>
    <property type="evidence" value="ECO:0007669"/>
    <property type="project" value="InterPro"/>
</dbReference>
<dbReference type="GO" id="GO:0009117">
    <property type="term" value="P:nucleotide metabolic process"/>
    <property type="evidence" value="ECO:0007669"/>
    <property type="project" value="InterPro"/>
</dbReference>
<dbReference type="CDD" id="cd16009">
    <property type="entry name" value="PPM"/>
    <property type="match status" value="1"/>
</dbReference>
<dbReference type="FunFam" id="3.30.70.1250:FF:000001">
    <property type="entry name" value="Phosphopentomutase"/>
    <property type="match status" value="1"/>
</dbReference>
<dbReference type="Gene3D" id="3.40.720.10">
    <property type="entry name" value="Alkaline Phosphatase, subunit A"/>
    <property type="match status" value="1"/>
</dbReference>
<dbReference type="Gene3D" id="3.30.70.1250">
    <property type="entry name" value="Phosphopentomutase"/>
    <property type="match status" value="1"/>
</dbReference>
<dbReference type="HAMAP" id="MF_00740">
    <property type="entry name" value="Phosphopentomut"/>
    <property type="match status" value="1"/>
</dbReference>
<dbReference type="InterPro" id="IPR017850">
    <property type="entry name" value="Alkaline_phosphatase_core_sf"/>
</dbReference>
<dbReference type="InterPro" id="IPR010045">
    <property type="entry name" value="DeoB"/>
</dbReference>
<dbReference type="InterPro" id="IPR006124">
    <property type="entry name" value="Metalloenzyme"/>
</dbReference>
<dbReference type="InterPro" id="IPR024052">
    <property type="entry name" value="Phosphopentomutase_DeoB_cap_sf"/>
</dbReference>
<dbReference type="NCBIfam" id="TIGR01696">
    <property type="entry name" value="deoB"/>
    <property type="match status" value="1"/>
</dbReference>
<dbReference type="NCBIfam" id="NF003766">
    <property type="entry name" value="PRK05362.1"/>
    <property type="match status" value="1"/>
</dbReference>
<dbReference type="PANTHER" id="PTHR21110">
    <property type="entry name" value="PHOSPHOPENTOMUTASE"/>
    <property type="match status" value="1"/>
</dbReference>
<dbReference type="PANTHER" id="PTHR21110:SF0">
    <property type="entry name" value="PHOSPHOPENTOMUTASE"/>
    <property type="match status" value="1"/>
</dbReference>
<dbReference type="Pfam" id="PF01676">
    <property type="entry name" value="Metalloenzyme"/>
    <property type="match status" value="1"/>
</dbReference>
<dbReference type="PIRSF" id="PIRSF001491">
    <property type="entry name" value="Ppentomutase"/>
    <property type="match status" value="1"/>
</dbReference>
<dbReference type="SUPFAM" id="SSF53649">
    <property type="entry name" value="Alkaline phosphatase-like"/>
    <property type="match status" value="1"/>
</dbReference>
<dbReference type="SUPFAM" id="SSF143856">
    <property type="entry name" value="DeoB insert domain-like"/>
    <property type="match status" value="1"/>
</dbReference>
<sequence>MRVVLIVLDSVGIGEMPDAHLYGDEGSNTIVNTAKAVSGLHLPNMAKLGLGNLDDIPGVEPVKPAEGIYGKMMEKSPGKDTTTGHWEIAGVILKKPFDLFPEGFPKELIEEFERRTGRKVIGNKPASGTEIIKELGPIHEKTGALIVYTSADSVFQIAAKKEIVPLEELYRYCEIARELLNEMGYKVARVIARPFTGEWPNYVRTPERKDFSLEPEGKTLLDVLTENGIPVYGVGKIADIFAGRGVTENYKTKDNNDGIDKTISLMKEKNHDCLIFTNLVDFDTKYGHRNDPVSYAKALEEFDARLPEIMHNLNEDDVLFITADHGCDPTTPSTDHSREMVPLLGYGGRLKKDVYVGIRETFADLGQTIADIFGVPPLENGTSFKNLIWE</sequence>
<protein>
    <recommendedName>
        <fullName evidence="1">Phosphopentomutase</fullName>
        <ecNumber evidence="1">5.4.2.7</ecNumber>
    </recommendedName>
    <alternativeName>
        <fullName evidence="1">Phosphodeoxyribomutase</fullName>
    </alternativeName>
</protein>
<reference key="1">
    <citation type="journal article" date="1999" name="Nature">
        <title>Evidence for lateral gene transfer between Archaea and Bacteria from genome sequence of Thermotoga maritima.</title>
        <authorList>
            <person name="Nelson K.E."/>
            <person name="Clayton R.A."/>
            <person name="Gill S.R."/>
            <person name="Gwinn M.L."/>
            <person name="Dodson R.J."/>
            <person name="Haft D.H."/>
            <person name="Hickey E.K."/>
            <person name="Peterson J.D."/>
            <person name="Nelson W.C."/>
            <person name="Ketchum K.A."/>
            <person name="McDonald L.A."/>
            <person name="Utterback T.R."/>
            <person name="Malek J.A."/>
            <person name="Linher K.D."/>
            <person name="Garrett M.M."/>
            <person name="Stewart A.M."/>
            <person name="Cotton M.D."/>
            <person name="Pratt M.S."/>
            <person name="Phillips C.A."/>
            <person name="Richardson D.L."/>
            <person name="Heidelberg J.F."/>
            <person name="Sutton G.G."/>
            <person name="Fleischmann R.D."/>
            <person name="Eisen J.A."/>
            <person name="White O."/>
            <person name="Salzberg S.L."/>
            <person name="Smith H.O."/>
            <person name="Venter J.C."/>
            <person name="Fraser C.M."/>
        </authorList>
    </citation>
    <scope>NUCLEOTIDE SEQUENCE [LARGE SCALE GENOMIC DNA]</scope>
    <source>
        <strain>ATCC 43589 / DSM 3109 / JCM 10099 / NBRC 100826 / MSB8</strain>
    </source>
</reference>
<name>DEOB_THEMA</name>
<keyword id="KW-0963">Cytoplasm</keyword>
<keyword id="KW-0413">Isomerase</keyword>
<keyword id="KW-0464">Manganese</keyword>
<keyword id="KW-0479">Metal-binding</keyword>
<keyword id="KW-1185">Reference proteome</keyword>
<organism>
    <name type="scientific">Thermotoga maritima (strain ATCC 43589 / DSM 3109 / JCM 10099 / NBRC 100826 / MSB8)</name>
    <dbReference type="NCBI Taxonomy" id="243274"/>
    <lineage>
        <taxon>Bacteria</taxon>
        <taxon>Thermotogati</taxon>
        <taxon>Thermotogota</taxon>
        <taxon>Thermotogae</taxon>
        <taxon>Thermotogales</taxon>
        <taxon>Thermotogaceae</taxon>
        <taxon>Thermotoga</taxon>
    </lineage>
</organism>
<accession>Q9WY14</accession>
<feature type="chain" id="PRO_0000199859" description="Phosphopentomutase">
    <location>
        <begin position="1"/>
        <end position="390"/>
    </location>
</feature>
<feature type="binding site" evidence="1">
    <location>
        <position position="9"/>
    </location>
    <ligand>
        <name>Mn(2+)</name>
        <dbReference type="ChEBI" id="CHEBI:29035"/>
        <label>1</label>
    </ligand>
</feature>
<feature type="binding site" evidence="1">
    <location>
        <position position="283"/>
    </location>
    <ligand>
        <name>Mn(2+)</name>
        <dbReference type="ChEBI" id="CHEBI:29035"/>
        <label>2</label>
    </ligand>
</feature>
<feature type="binding site" evidence="1">
    <location>
        <position position="288"/>
    </location>
    <ligand>
        <name>Mn(2+)</name>
        <dbReference type="ChEBI" id="CHEBI:29035"/>
        <label>2</label>
    </ligand>
</feature>
<feature type="binding site" evidence="1">
    <location>
        <position position="324"/>
    </location>
    <ligand>
        <name>Mn(2+)</name>
        <dbReference type="ChEBI" id="CHEBI:29035"/>
        <label>1</label>
    </ligand>
</feature>
<feature type="binding site" evidence="1">
    <location>
        <position position="325"/>
    </location>
    <ligand>
        <name>Mn(2+)</name>
        <dbReference type="ChEBI" id="CHEBI:29035"/>
        <label>1</label>
    </ligand>
</feature>
<feature type="binding site" evidence="1">
    <location>
        <position position="336"/>
    </location>
    <ligand>
        <name>Mn(2+)</name>
        <dbReference type="ChEBI" id="CHEBI:29035"/>
        <label>2</label>
    </ligand>
</feature>
<proteinExistence type="inferred from homology"/>
<evidence type="ECO:0000255" key="1">
    <source>
        <dbReference type="HAMAP-Rule" id="MF_00740"/>
    </source>
</evidence>